<reference key="1">
    <citation type="journal article" date="1993" name="Arch. Virol.">
        <title>In vitro translation of rice dwarf phytoreovirus genome segments S4 to S10.</title>
        <authorList>
            <person name="Suzuki N."/>
        </authorList>
    </citation>
    <scope>NUCLEOTIDE SEQUENCE [MRNA]</scope>
</reference>
<organismHost>
    <name type="scientific">Alopecurus aequalis</name>
    <dbReference type="NCBI Taxonomy" id="114194"/>
</organismHost>
<organismHost>
    <name type="scientific">Echinochloa crus-galli</name>
    <name type="common">Barnyard grass</name>
    <name type="synonym">Panicum crus-galli</name>
    <dbReference type="NCBI Taxonomy" id="90397"/>
</organismHost>
<organismHost>
    <name type="scientific">Nephotettix cincticeps</name>
    <name type="common">Green rice leafhopper</name>
    <name type="synonym">Selenocephalus cincticeps</name>
    <dbReference type="NCBI Taxonomy" id="94400"/>
</organismHost>
<organismHost>
    <name type="scientific">Oryza sativa</name>
    <name type="common">Rice</name>
    <dbReference type="NCBI Taxonomy" id="4530"/>
</organismHost>
<organismHost>
    <name type="scientific">Paspalum</name>
    <dbReference type="NCBI Taxonomy" id="147271"/>
</organismHost>
<proteinExistence type="evidence at transcript level"/>
<comment type="function">
    <text evidence="1">Suppressor of RNA-mediated gene silencing, also known as post-transcriptional gene silencing (PTGS), a mechanism of plant viral defense that limits the accumulation of viral RNAs.</text>
</comment>
<comment type="similarity">
    <text evidence="2">Belongs to the phytoreovirus non-structural protein 10 family.</text>
</comment>
<dbReference type="EMBL" id="D10221">
    <property type="protein sequence ID" value="BAA01073.1"/>
    <property type="molecule type" value="mRNA"/>
</dbReference>
<dbReference type="GO" id="GO:0052170">
    <property type="term" value="P:symbiont-mediated suppression of host innate immune response"/>
    <property type="evidence" value="ECO:0007669"/>
    <property type="project" value="UniProtKB-KW"/>
</dbReference>
<dbReference type="InterPro" id="IPR008777">
    <property type="entry name" value="Phytoreo_Pns"/>
</dbReference>
<dbReference type="Pfam" id="PF05451">
    <property type="entry name" value="Phytoreo_Pns"/>
    <property type="match status" value="1"/>
</dbReference>
<accession>Q85447</accession>
<evidence type="ECO:0000250" key="1"/>
<evidence type="ECO:0000305" key="2"/>
<keyword id="KW-0945">Host-virus interaction</keyword>
<keyword id="KW-1090">Inhibition of host innate immune response by virus</keyword>
<keyword id="KW-0941">Suppressor of RNA silencing</keyword>
<keyword id="KW-0899">Viral immunoevasion</keyword>
<organism>
    <name type="scientific">Rice dwarf virus (isolate Akita)</name>
    <name type="common">RDV</name>
    <dbReference type="NCBI Taxonomy" id="142803"/>
    <lineage>
        <taxon>Viruses</taxon>
        <taxon>Riboviria</taxon>
        <taxon>Orthornavirae</taxon>
        <taxon>Duplornaviricota</taxon>
        <taxon>Resentoviricetes</taxon>
        <taxon>Reovirales</taxon>
        <taxon>Sedoreoviridae</taxon>
        <taxon>Phytoreovirus</taxon>
        <taxon>Rice dwarf virus</taxon>
    </lineage>
</organism>
<feature type="chain" id="PRO_0000222797" description="Suppressor of RNA-mediated gene silencing">
    <location>
        <begin position="1"/>
        <end position="353"/>
    </location>
</feature>
<protein>
    <recommendedName>
        <fullName>Suppressor of RNA-mediated gene silencing</fullName>
    </recommendedName>
    <alternativeName>
        <fullName>Non-structural protein 10</fullName>
        <shortName>Pns10</shortName>
    </alternativeName>
</protein>
<name>VSR_RDVA</name>
<sequence>MEVDTATFVRLHHELLCAHEGPSIISKFDAIKKVKLGTLANQSGGVNNITEAFLAKLRNFERKSEAYLASDLAERELTRDTHKAIVFVTKSVLLGGKSLKDLLPYGVIVCAFIFIPETASVLDNVPVMIGNQKRPLTVALIKYIAKSLNCDLVGDSYDTFYYCNSSAYGKNLISVSDNDFSNPQRALLSVGDLCYQAARSLHVAAANYIRIFDRMPPGFQPSKHLFRIIGVLDMETLKTMVTSNIAREPGMFCHDNVKDVLHRIGVYSPNHHFSAVILWKGWASTYAYMFNQEQLNMLSGTSGLAGDFGKYKLTYGSTFDEGVIHVQYQFVTPEVVRKRNIYPDLSALKGGGS</sequence>